<feature type="chain" id="PRO_1000087514" description="Putative regulatory protein PTH_1796">
    <location>
        <begin position="1"/>
        <end position="91"/>
    </location>
</feature>
<gene>
    <name type="ordered locus">PTH_1796</name>
</gene>
<proteinExistence type="inferred from homology"/>
<sequence length="91" mass="9892">MEIKLINIGFGNIVSANRIIAIVSPESAPIKRIITEARDRGMLIDATYGRRTRAVIITDSDHVILSAVQPETVAHRLVSKEAPAQAEESAD</sequence>
<protein>
    <recommendedName>
        <fullName evidence="1">Putative regulatory protein PTH_1796</fullName>
    </recommendedName>
</protein>
<organism>
    <name type="scientific">Pelotomaculum thermopropionicum (strain DSM 13744 / JCM 10971 / SI)</name>
    <dbReference type="NCBI Taxonomy" id="370438"/>
    <lineage>
        <taxon>Bacteria</taxon>
        <taxon>Bacillati</taxon>
        <taxon>Bacillota</taxon>
        <taxon>Clostridia</taxon>
        <taxon>Eubacteriales</taxon>
        <taxon>Desulfotomaculaceae</taxon>
        <taxon>Pelotomaculum</taxon>
    </lineage>
</organism>
<keyword id="KW-1185">Reference proteome</keyword>
<evidence type="ECO:0000255" key="1">
    <source>
        <dbReference type="HAMAP-Rule" id="MF_01503"/>
    </source>
</evidence>
<reference key="1">
    <citation type="journal article" date="2008" name="Genome Res.">
        <title>The genome of Pelotomaculum thermopropionicum reveals niche-associated evolution in anaerobic microbiota.</title>
        <authorList>
            <person name="Kosaka T."/>
            <person name="Kato S."/>
            <person name="Shimoyama T."/>
            <person name="Ishii S."/>
            <person name="Abe T."/>
            <person name="Watanabe K."/>
        </authorList>
    </citation>
    <scope>NUCLEOTIDE SEQUENCE [LARGE SCALE GENOMIC DNA]</scope>
    <source>
        <strain>DSM 13744 / JCM 10971 / SI</strain>
    </source>
</reference>
<name>Y1796_PELTS</name>
<comment type="similarity">
    <text evidence="1">Belongs to the RemA family.</text>
</comment>
<accession>A5D1C5</accession>
<dbReference type="EMBL" id="AP009389">
    <property type="protein sequence ID" value="BAF59977.1"/>
    <property type="molecule type" value="Genomic_DNA"/>
</dbReference>
<dbReference type="SMR" id="A5D1C5"/>
<dbReference type="STRING" id="370438.PTH_1796"/>
<dbReference type="KEGG" id="pth:PTH_1796"/>
<dbReference type="eggNOG" id="COG2052">
    <property type="taxonomic scope" value="Bacteria"/>
</dbReference>
<dbReference type="HOGENOM" id="CLU_165326_0_0_9"/>
<dbReference type="Proteomes" id="UP000006556">
    <property type="component" value="Chromosome"/>
</dbReference>
<dbReference type="HAMAP" id="MF_01503">
    <property type="entry name" value="RemA"/>
    <property type="match status" value="1"/>
</dbReference>
<dbReference type="InterPro" id="IPR007169">
    <property type="entry name" value="RemA-like"/>
</dbReference>
<dbReference type="NCBIfam" id="NF046064">
    <property type="entry name" value="MtxBflmRegRemA"/>
    <property type="match status" value="1"/>
</dbReference>
<dbReference type="NCBIfam" id="NF003315">
    <property type="entry name" value="PRK04323.1"/>
    <property type="match status" value="1"/>
</dbReference>
<dbReference type="PANTHER" id="PTHR38449:SF1">
    <property type="entry name" value="REGULATORY PROTEIN SSL2874-RELATED"/>
    <property type="match status" value="1"/>
</dbReference>
<dbReference type="PANTHER" id="PTHR38449">
    <property type="entry name" value="REGULATORY PROTEIN TM_1690-RELATED"/>
    <property type="match status" value="1"/>
</dbReference>
<dbReference type="Pfam" id="PF04025">
    <property type="entry name" value="RemA-like"/>
    <property type="match status" value="1"/>
</dbReference>